<reference key="1">
    <citation type="journal article" date="2002" name="J. Bacteriol.">
        <title>Whole-genome comparison of Mycobacterium tuberculosis clinical and laboratory strains.</title>
        <authorList>
            <person name="Fleischmann R.D."/>
            <person name="Alland D."/>
            <person name="Eisen J.A."/>
            <person name="Carpenter L."/>
            <person name="White O."/>
            <person name="Peterson J.D."/>
            <person name="DeBoy R.T."/>
            <person name="Dodson R.J."/>
            <person name="Gwinn M.L."/>
            <person name="Haft D.H."/>
            <person name="Hickey E.K."/>
            <person name="Kolonay J.F."/>
            <person name="Nelson W.C."/>
            <person name="Umayam L.A."/>
            <person name="Ermolaeva M.D."/>
            <person name="Salzberg S.L."/>
            <person name="Delcher A."/>
            <person name="Utterback T.R."/>
            <person name="Weidman J.F."/>
            <person name="Khouri H.M."/>
            <person name="Gill J."/>
            <person name="Mikula A."/>
            <person name="Bishai W."/>
            <person name="Jacobs W.R. Jr."/>
            <person name="Venter J.C."/>
            <person name="Fraser C.M."/>
        </authorList>
    </citation>
    <scope>NUCLEOTIDE SEQUENCE [LARGE SCALE GENOMIC DNA]</scope>
    <source>
        <strain>CDC 1551 / Oshkosh</strain>
    </source>
</reference>
<feature type="chain" id="PRO_0000427192" description="Glucose-1-phosphate adenylyltransferase">
    <location>
        <begin position="1"/>
        <end position="404"/>
    </location>
</feature>
<feature type="binding site" evidence="1">
    <location>
        <position position="99"/>
    </location>
    <ligand>
        <name>alpha-D-glucose 1-phosphate</name>
        <dbReference type="ChEBI" id="CHEBI:58601"/>
    </ligand>
</feature>
<feature type="binding site" evidence="1">
    <location>
        <position position="164"/>
    </location>
    <ligand>
        <name>alpha-D-glucose 1-phosphate</name>
        <dbReference type="ChEBI" id="CHEBI:58601"/>
    </ligand>
</feature>
<feature type="binding site" evidence="1">
    <location>
        <begin position="179"/>
        <end position="180"/>
    </location>
    <ligand>
        <name>alpha-D-glucose 1-phosphate</name>
        <dbReference type="ChEBI" id="CHEBI:58601"/>
    </ligand>
</feature>
<feature type="binding site" evidence="1">
    <location>
        <position position="197"/>
    </location>
    <ligand>
        <name>alpha-D-glucose 1-phosphate</name>
        <dbReference type="ChEBI" id="CHEBI:58601"/>
    </ligand>
</feature>
<evidence type="ECO:0000255" key="1">
    <source>
        <dbReference type="HAMAP-Rule" id="MF_00624"/>
    </source>
</evidence>
<evidence type="ECO:0000305" key="2"/>
<gene>
    <name evidence="1" type="primary">glgC</name>
    <name type="ordered locus">MT1251</name>
</gene>
<dbReference type="EC" id="2.7.7.27" evidence="1"/>
<dbReference type="EMBL" id="AE000516">
    <property type="protein sequence ID" value="AAK45508.1"/>
    <property type="molecule type" value="Genomic_DNA"/>
</dbReference>
<dbReference type="PIR" id="C70610">
    <property type="entry name" value="C70610"/>
</dbReference>
<dbReference type="RefSeq" id="WP_003406249.1">
    <property type="nucleotide sequence ID" value="NZ_KK341227.1"/>
</dbReference>
<dbReference type="SMR" id="P9WN42"/>
<dbReference type="GeneID" id="45425183"/>
<dbReference type="KEGG" id="mtc:MT1251"/>
<dbReference type="PATRIC" id="fig|83331.31.peg.1352"/>
<dbReference type="HOGENOM" id="CLU_029499_14_1_11"/>
<dbReference type="UniPathway" id="UPA00164"/>
<dbReference type="UniPathway" id="UPA00934"/>
<dbReference type="Proteomes" id="UP000001020">
    <property type="component" value="Chromosome"/>
</dbReference>
<dbReference type="GO" id="GO:0005524">
    <property type="term" value="F:ATP binding"/>
    <property type="evidence" value="ECO:0007669"/>
    <property type="project" value="UniProtKB-KW"/>
</dbReference>
<dbReference type="GO" id="GO:0008878">
    <property type="term" value="F:glucose-1-phosphate adenylyltransferase activity"/>
    <property type="evidence" value="ECO:0007669"/>
    <property type="project" value="UniProtKB-UniRule"/>
</dbReference>
<dbReference type="GO" id="GO:0045227">
    <property type="term" value="P:capsule polysaccharide biosynthetic process"/>
    <property type="evidence" value="ECO:0007669"/>
    <property type="project" value="UniProtKB-UniPathway"/>
</dbReference>
<dbReference type="GO" id="GO:0005978">
    <property type="term" value="P:glycogen biosynthetic process"/>
    <property type="evidence" value="ECO:0007669"/>
    <property type="project" value="UniProtKB-UniRule"/>
</dbReference>
<dbReference type="CDD" id="cd02508">
    <property type="entry name" value="ADP_Glucose_PP"/>
    <property type="match status" value="1"/>
</dbReference>
<dbReference type="CDD" id="cd04651">
    <property type="entry name" value="LbH_G1P_AT_C"/>
    <property type="match status" value="1"/>
</dbReference>
<dbReference type="FunFam" id="2.160.10.10:FF:000020">
    <property type="entry name" value="Glucose-1-phosphate adenylyltransferase"/>
    <property type="match status" value="1"/>
</dbReference>
<dbReference type="FunFam" id="3.90.550.10:FF:000014">
    <property type="entry name" value="Glucose-1-phosphate adenylyltransferase"/>
    <property type="match status" value="1"/>
</dbReference>
<dbReference type="Gene3D" id="2.160.10.10">
    <property type="entry name" value="Hexapeptide repeat proteins"/>
    <property type="match status" value="1"/>
</dbReference>
<dbReference type="Gene3D" id="3.90.550.10">
    <property type="entry name" value="Spore Coat Polysaccharide Biosynthesis Protein SpsA, Chain A"/>
    <property type="match status" value="1"/>
</dbReference>
<dbReference type="HAMAP" id="MF_00624">
    <property type="entry name" value="GlgC"/>
    <property type="match status" value="1"/>
</dbReference>
<dbReference type="InterPro" id="IPR011831">
    <property type="entry name" value="ADP-Glc_PPase"/>
</dbReference>
<dbReference type="InterPro" id="IPR005836">
    <property type="entry name" value="ADP_Glu_pyroP_CS"/>
</dbReference>
<dbReference type="InterPro" id="IPR023049">
    <property type="entry name" value="GlgC_bac"/>
</dbReference>
<dbReference type="InterPro" id="IPR056818">
    <property type="entry name" value="GlmU/GlgC-like_hexapep"/>
</dbReference>
<dbReference type="InterPro" id="IPR005835">
    <property type="entry name" value="NTP_transferase_dom"/>
</dbReference>
<dbReference type="InterPro" id="IPR029044">
    <property type="entry name" value="Nucleotide-diphossugar_trans"/>
</dbReference>
<dbReference type="InterPro" id="IPR011004">
    <property type="entry name" value="Trimer_LpxA-like_sf"/>
</dbReference>
<dbReference type="NCBIfam" id="TIGR02091">
    <property type="entry name" value="glgC"/>
    <property type="match status" value="1"/>
</dbReference>
<dbReference type="NCBIfam" id="NF001947">
    <property type="entry name" value="PRK00725.1"/>
    <property type="match status" value="1"/>
</dbReference>
<dbReference type="NCBIfam" id="NF002023">
    <property type="entry name" value="PRK00844.1"/>
    <property type="match status" value="1"/>
</dbReference>
<dbReference type="PANTHER" id="PTHR43523:SF2">
    <property type="entry name" value="GLUCOSE-1-PHOSPHATE ADENYLYLTRANSFERASE"/>
    <property type="match status" value="1"/>
</dbReference>
<dbReference type="PANTHER" id="PTHR43523">
    <property type="entry name" value="GLUCOSE-1-PHOSPHATE ADENYLYLTRANSFERASE-RELATED"/>
    <property type="match status" value="1"/>
</dbReference>
<dbReference type="Pfam" id="PF24894">
    <property type="entry name" value="Hexapep_GlmU"/>
    <property type="match status" value="1"/>
</dbReference>
<dbReference type="Pfam" id="PF00483">
    <property type="entry name" value="NTP_transferase"/>
    <property type="match status" value="1"/>
</dbReference>
<dbReference type="SUPFAM" id="SSF53448">
    <property type="entry name" value="Nucleotide-diphospho-sugar transferases"/>
    <property type="match status" value="1"/>
</dbReference>
<dbReference type="SUPFAM" id="SSF51161">
    <property type="entry name" value="Trimeric LpxA-like enzymes"/>
    <property type="match status" value="1"/>
</dbReference>
<dbReference type="PROSITE" id="PS00808">
    <property type="entry name" value="ADP_GLC_PYROPHOSPH_1"/>
    <property type="match status" value="1"/>
</dbReference>
<dbReference type="PROSITE" id="PS00809">
    <property type="entry name" value="ADP_GLC_PYROPHOSPH_2"/>
    <property type="match status" value="1"/>
</dbReference>
<dbReference type="PROSITE" id="PS00810">
    <property type="entry name" value="ADP_GLC_PYROPHOSPH_3"/>
    <property type="match status" value="1"/>
</dbReference>
<proteinExistence type="inferred from homology"/>
<comment type="function">
    <text evidence="1">Involved in the biosynthesis of ADP-glucose, a building block, required in the biosynthesis of maltose-1-phosphate (M1P) and in the elongation reactions to produce linear alpha-1,4-glucans. Catalyzes the reaction between ATP and alpha-D-glucose 1-phosphate (G1P) to produce pyrophosphate and ADP-Glc.</text>
</comment>
<comment type="catalytic activity">
    <reaction evidence="1">
        <text>alpha-D-glucose 1-phosphate + ATP + H(+) = ADP-alpha-D-glucose + diphosphate</text>
        <dbReference type="Rhea" id="RHEA:12120"/>
        <dbReference type="ChEBI" id="CHEBI:15378"/>
        <dbReference type="ChEBI" id="CHEBI:30616"/>
        <dbReference type="ChEBI" id="CHEBI:33019"/>
        <dbReference type="ChEBI" id="CHEBI:57498"/>
        <dbReference type="ChEBI" id="CHEBI:58601"/>
        <dbReference type="EC" id="2.7.7.27"/>
    </reaction>
</comment>
<comment type="pathway">
    <text evidence="2">Capsule biogenesis; capsule polysaccharide biosynthesis.</text>
</comment>
<comment type="pathway">
    <text evidence="1">Glycan biosynthesis; glycogen biosynthesis.</text>
</comment>
<comment type="similarity">
    <text evidence="1">Belongs to the bacterial/plant glucose-1-phosphate adenylyltransferase family.</text>
</comment>
<sequence length="404" mass="43800">MREVPHVLGIVLAGGEGKRLYPLTADRAKPAVPFGGAYRLIDFVLSNLVNARYLRICVLTQYKSHSLDRHISQNWRLSGLAGEYITPVPAQQRLGPRWYTGSADAIYQSLNLIYDEDPDYIVVFGADHVYRMDPEQMVRFHIDSGAGATVAGIRVPRENATAFGCIDADDSGRIRSFVEKPLEPPGTPDDPDTTFVSMGNYIFTTKVLIDAIRADADDDHSDHDMGGDIVPRLVADGMAAVYDFSDNEVPGATDRDRAYWRDVGTLDAFYDAHMDLVSVHPVFNLYNKRWPIRGESENLAPAKFVNGGSAQESVVGAGSIISAASVRNSVLSSNVVVDDGAIVEGSVIMPGTRVGRGAVVRHAILDKNVVVGPGEMVGVDLEKDRERFAISAGGVVAVGKGVWI</sequence>
<protein>
    <recommendedName>
        <fullName evidence="1">Glucose-1-phosphate adenylyltransferase</fullName>
        <ecNumber evidence="1">2.7.7.27</ecNumber>
    </recommendedName>
    <alternativeName>
        <fullName evidence="1">ADP-glucose pyrophosphorylase</fullName>
        <shortName evidence="1">ADPGlc PPase</shortName>
    </alternativeName>
    <alternativeName>
        <fullName evidence="1">ADP-glucose synthase</fullName>
    </alternativeName>
</protein>
<accession>P9WN42</accession>
<accession>L0T8Q8</accession>
<accession>O05314</accession>
<accession>P64241</accession>
<organism>
    <name type="scientific">Mycobacterium tuberculosis (strain CDC 1551 / Oshkosh)</name>
    <dbReference type="NCBI Taxonomy" id="83331"/>
    <lineage>
        <taxon>Bacteria</taxon>
        <taxon>Bacillati</taxon>
        <taxon>Actinomycetota</taxon>
        <taxon>Actinomycetes</taxon>
        <taxon>Mycobacteriales</taxon>
        <taxon>Mycobacteriaceae</taxon>
        <taxon>Mycobacterium</taxon>
        <taxon>Mycobacterium tuberculosis complex</taxon>
    </lineage>
</organism>
<name>GLGC_MYCTO</name>
<keyword id="KW-0067">ATP-binding</keyword>
<keyword id="KW-0119">Carbohydrate metabolism</keyword>
<keyword id="KW-0320">Glycogen biosynthesis</keyword>
<keyword id="KW-0321">Glycogen metabolism</keyword>
<keyword id="KW-0547">Nucleotide-binding</keyword>
<keyword id="KW-0548">Nucleotidyltransferase</keyword>
<keyword id="KW-1185">Reference proteome</keyword>
<keyword id="KW-0808">Transferase</keyword>